<feature type="signal peptide" evidence="3 4">
    <location>
        <begin position="1"/>
        <end position="16"/>
    </location>
</feature>
<feature type="propeptide" id="PRO_0000026069" description="Activation peptide">
    <location>
        <begin position="17"/>
        <end position="62"/>
    </location>
</feature>
<feature type="chain" id="PRO_0000026070" description="Gastricsin">
    <location>
        <begin position="63"/>
        <end position="392"/>
    </location>
</feature>
<feature type="domain" description="Peptidase A1" evidence="2">
    <location>
        <begin position="76"/>
        <end position="389"/>
    </location>
</feature>
<feature type="active site">
    <location>
        <position position="94"/>
    </location>
</feature>
<feature type="active site">
    <location>
        <position position="280"/>
    </location>
</feature>
<feature type="disulfide bond" evidence="1">
    <location>
        <begin position="107"/>
        <end position="112"/>
    </location>
</feature>
<feature type="disulfide bond" evidence="1">
    <location>
        <begin position="270"/>
        <end position="275"/>
    </location>
</feature>
<feature type="disulfide bond" evidence="1">
    <location>
        <begin position="314"/>
        <end position="347"/>
    </location>
</feature>
<feature type="sequence conflict" description="In Ref. 3; AA sequence." evidence="5" ref="3">
    <original>E</original>
    <variation>Q</variation>
    <location>
        <position position="31"/>
    </location>
</feature>
<feature type="sequence conflict" description="In Ref. 3; AA sequence." evidence="5" ref="3">
    <original>S</original>
    <variation>A</variation>
    <location>
        <position position="103"/>
    </location>
</feature>
<feature type="sequence conflict" description="In Ref. 3; AA sequence." evidence="5" ref="3">
    <original>S</original>
    <variation>L</variation>
    <location>
        <position position="109"/>
    </location>
</feature>
<name>PEPC_RAT</name>
<organism>
    <name type="scientific">Rattus norvegicus</name>
    <name type="common">Rat</name>
    <dbReference type="NCBI Taxonomy" id="10116"/>
    <lineage>
        <taxon>Eukaryota</taxon>
        <taxon>Metazoa</taxon>
        <taxon>Chordata</taxon>
        <taxon>Craniata</taxon>
        <taxon>Vertebrata</taxon>
        <taxon>Euteleostomi</taxon>
        <taxon>Mammalia</taxon>
        <taxon>Eutheria</taxon>
        <taxon>Euarchontoglires</taxon>
        <taxon>Glires</taxon>
        <taxon>Rodentia</taxon>
        <taxon>Myomorpha</taxon>
        <taxon>Muroidea</taxon>
        <taxon>Muridae</taxon>
        <taxon>Murinae</taxon>
        <taxon>Rattus</taxon>
    </lineage>
</organism>
<evidence type="ECO:0000250" key="1"/>
<evidence type="ECO:0000255" key="2">
    <source>
        <dbReference type="PROSITE-ProRule" id="PRU01103"/>
    </source>
</evidence>
<evidence type="ECO:0000269" key="3">
    <source>
    </source>
</evidence>
<evidence type="ECO:0000269" key="4">
    <source>
    </source>
</evidence>
<evidence type="ECO:0000305" key="5"/>
<protein>
    <recommendedName>
        <fullName>Gastricsin</fullName>
        <ecNumber>3.4.23.3</ecNumber>
    </recommendedName>
    <alternativeName>
        <fullName>Pepsinogen C</fullName>
    </alternativeName>
</protein>
<dbReference type="EC" id="3.4.23.3"/>
<dbReference type="EMBL" id="X04644">
    <property type="protein sequence ID" value="CAA28305.1"/>
    <property type="molecule type" value="mRNA"/>
</dbReference>
<dbReference type="EMBL" id="M25993">
    <property type="protein sequence ID" value="AAA41827.1"/>
    <property type="molecule type" value="Genomic_DNA"/>
</dbReference>
<dbReference type="EMBL" id="M25985">
    <property type="protein sequence ID" value="AAA41827.1"/>
    <property type="status" value="JOINED"/>
    <property type="molecule type" value="Genomic_DNA"/>
</dbReference>
<dbReference type="EMBL" id="M25986">
    <property type="protein sequence ID" value="AAA41827.1"/>
    <property type="status" value="JOINED"/>
    <property type="molecule type" value="Genomic_DNA"/>
</dbReference>
<dbReference type="EMBL" id="M25987">
    <property type="protein sequence ID" value="AAA41827.1"/>
    <property type="status" value="JOINED"/>
    <property type="molecule type" value="Genomic_DNA"/>
</dbReference>
<dbReference type="EMBL" id="M25988">
    <property type="protein sequence ID" value="AAA41827.1"/>
    <property type="status" value="JOINED"/>
    <property type="molecule type" value="Genomic_DNA"/>
</dbReference>
<dbReference type="EMBL" id="M25989">
    <property type="protein sequence ID" value="AAA41827.1"/>
    <property type="status" value="JOINED"/>
    <property type="molecule type" value="Genomic_DNA"/>
</dbReference>
<dbReference type="EMBL" id="M25990">
    <property type="protein sequence ID" value="AAA41827.1"/>
    <property type="status" value="JOINED"/>
    <property type="molecule type" value="Genomic_DNA"/>
</dbReference>
<dbReference type="EMBL" id="M25991">
    <property type="protein sequence ID" value="AAA41827.1"/>
    <property type="status" value="JOINED"/>
    <property type="molecule type" value="Genomic_DNA"/>
</dbReference>
<dbReference type="EMBL" id="M25992">
    <property type="protein sequence ID" value="AAA41827.1"/>
    <property type="status" value="JOINED"/>
    <property type="molecule type" value="Genomic_DNA"/>
</dbReference>
<dbReference type="PIR" id="A33510">
    <property type="entry name" value="A24608"/>
</dbReference>
<dbReference type="RefSeq" id="NP_579818.1">
    <property type="nucleotide sequence ID" value="NM_133284.2"/>
</dbReference>
<dbReference type="SMR" id="P04073"/>
<dbReference type="FunCoup" id="P04073">
    <property type="interactions" value="22"/>
</dbReference>
<dbReference type="STRING" id="10116.ENSRNOP00000019650"/>
<dbReference type="BindingDB" id="P04073"/>
<dbReference type="ChEMBL" id="CHEMBL2152"/>
<dbReference type="MEROPS" id="A01.003"/>
<dbReference type="iPTMnet" id="P04073"/>
<dbReference type="PhosphoSitePlus" id="P04073"/>
<dbReference type="PaxDb" id="10116-ENSRNOP00000019650"/>
<dbReference type="Ensembl" id="ENSRNOT00000019650.4">
    <property type="protein sequence ID" value="ENSRNOP00000019650.2"/>
    <property type="gene ID" value="ENSRNOG00000014492.6"/>
</dbReference>
<dbReference type="GeneID" id="24864"/>
<dbReference type="KEGG" id="rno:24864"/>
<dbReference type="UCSC" id="RGD:3943">
    <property type="organism name" value="rat"/>
</dbReference>
<dbReference type="AGR" id="RGD:3943"/>
<dbReference type="CTD" id="5225"/>
<dbReference type="RGD" id="3943">
    <property type="gene designation" value="Pgc"/>
</dbReference>
<dbReference type="eggNOG" id="KOG1339">
    <property type="taxonomic scope" value="Eukaryota"/>
</dbReference>
<dbReference type="GeneTree" id="ENSGT00940000160626"/>
<dbReference type="HOGENOM" id="CLU_013253_3_0_1"/>
<dbReference type="InParanoid" id="P04073"/>
<dbReference type="OMA" id="YSGEIYW"/>
<dbReference type="OrthoDB" id="28318at9989"/>
<dbReference type="PhylomeDB" id="P04073"/>
<dbReference type="TreeFam" id="TF314990"/>
<dbReference type="PRO" id="PR:P04073"/>
<dbReference type="Proteomes" id="UP000002494">
    <property type="component" value="Chromosome 9"/>
</dbReference>
<dbReference type="Bgee" id="ENSRNOG00000014492">
    <property type="expression patterns" value="Expressed in stomach and 16 other cell types or tissues"/>
</dbReference>
<dbReference type="GO" id="GO:0005615">
    <property type="term" value="C:extracellular space"/>
    <property type="evidence" value="ECO:0000266"/>
    <property type="project" value="RGD"/>
</dbReference>
<dbReference type="GO" id="GO:0004190">
    <property type="term" value="F:aspartic-type endopeptidase activity"/>
    <property type="evidence" value="ECO:0000266"/>
    <property type="project" value="RGD"/>
</dbReference>
<dbReference type="GO" id="GO:0007586">
    <property type="term" value="P:digestion"/>
    <property type="evidence" value="ECO:0007669"/>
    <property type="project" value="UniProtKB-KW"/>
</dbReference>
<dbReference type="GO" id="GO:0002803">
    <property type="term" value="P:positive regulation of antibacterial peptide production"/>
    <property type="evidence" value="ECO:0000266"/>
    <property type="project" value="RGD"/>
</dbReference>
<dbReference type="GO" id="GO:0006508">
    <property type="term" value="P:proteolysis"/>
    <property type="evidence" value="ECO:0000318"/>
    <property type="project" value="GO_Central"/>
</dbReference>
<dbReference type="FunFam" id="2.40.70.10:FF:000006">
    <property type="entry name" value="Cathepsin E"/>
    <property type="match status" value="1"/>
</dbReference>
<dbReference type="FunFam" id="2.40.70.10:FF:000004">
    <property type="entry name" value="Pepsin A"/>
    <property type="match status" value="1"/>
</dbReference>
<dbReference type="Gene3D" id="6.10.140.60">
    <property type="match status" value="1"/>
</dbReference>
<dbReference type="Gene3D" id="2.40.70.10">
    <property type="entry name" value="Acid Proteases"/>
    <property type="match status" value="2"/>
</dbReference>
<dbReference type="InterPro" id="IPR001461">
    <property type="entry name" value="Aspartic_peptidase_A1"/>
</dbReference>
<dbReference type="InterPro" id="IPR001969">
    <property type="entry name" value="Aspartic_peptidase_AS"/>
</dbReference>
<dbReference type="InterPro" id="IPR012848">
    <property type="entry name" value="Aspartic_peptidase_N"/>
</dbReference>
<dbReference type="InterPro" id="IPR033121">
    <property type="entry name" value="PEPTIDASE_A1"/>
</dbReference>
<dbReference type="InterPro" id="IPR021109">
    <property type="entry name" value="Peptidase_aspartic_dom_sf"/>
</dbReference>
<dbReference type="PANTHER" id="PTHR47966">
    <property type="entry name" value="BETA-SITE APP-CLEAVING ENZYME, ISOFORM A-RELATED"/>
    <property type="match status" value="1"/>
</dbReference>
<dbReference type="PANTHER" id="PTHR47966:SF72">
    <property type="entry name" value="GASTRICSIN"/>
    <property type="match status" value="1"/>
</dbReference>
<dbReference type="Pfam" id="PF07966">
    <property type="entry name" value="A1_Propeptide"/>
    <property type="match status" value="1"/>
</dbReference>
<dbReference type="Pfam" id="PF00026">
    <property type="entry name" value="Asp"/>
    <property type="match status" value="1"/>
</dbReference>
<dbReference type="PRINTS" id="PR00792">
    <property type="entry name" value="PEPSIN"/>
</dbReference>
<dbReference type="SUPFAM" id="SSF50630">
    <property type="entry name" value="Acid proteases"/>
    <property type="match status" value="1"/>
</dbReference>
<dbReference type="PROSITE" id="PS00141">
    <property type="entry name" value="ASP_PROTEASE"/>
    <property type="match status" value="2"/>
</dbReference>
<dbReference type="PROSITE" id="PS51767">
    <property type="entry name" value="PEPTIDASE_A1"/>
    <property type="match status" value="1"/>
</dbReference>
<reference key="1">
    <citation type="journal article" date="1986" name="Eur. J. Biochem.">
        <title>Nucleotide sequence of a nearly full-length cDNA coding for pepsinogen of rat gastric mucosa.</title>
        <authorList>
            <person name="Ichihara Y."/>
            <person name="Sogawa K."/>
            <person name="Morohashi K."/>
            <person name="Fujii-Kuriyama Y."/>
            <person name="Takahashi K."/>
        </authorList>
    </citation>
    <scope>NUCLEOTIDE SEQUENCE [MRNA]</scope>
    <source>
        <strain>Wistar</strain>
    </source>
</reference>
<reference key="2">
    <citation type="journal article" date="1989" name="J. Biol. Chem.">
        <title>Primary structure and transcriptional regulation of rat pepsinogen C gene.</title>
        <authorList>
            <person name="Ishihara T."/>
            <person name="Ichihara Y."/>
            <person name="Hayano T."/>
            <person name="Katsura I."/>
            <person name="Sogawa K."/>
            <person name="Fujii-Kuriyama Y."/>
            <person name="Takahashi K."/>
        </authorList>
    </citation>
    <scope>NUCLEOTIDE SEQUENCE [GENOMIC DNA]</scope>
    <source>
        <strain>Wistar</strain>
    </source>
</reference>
<reference key="3">
    <citation type="journal article" date="1984" name="Biochim. Biophys. Acta">
        <title>The N-terminal sequence of rat pepsinogen.</title>
        <authorList>
            <person name="Arai K.M."/>
            <person name="Muto N."/>
            <person name="Tani S."/>
            <person name="Akahane K."/>
        </authorList>
    </citation>
    <scope>PROTEIN SEQUENCE OF 17-112</scope>
    <source>
        <strain>Wistar</strain>
    </source>
</reference>
<proteinExistence type="evidence at protein level"/>
<gene>
    <name type="primary">Pgc</name>
</gene>
<sequence>MKWMVVALLCLPLLEASLLRVPLRKMKSIRETMKEQGVLKDFLKTHKYDPGQKYHFGNFGDYSVLYEPMAYMDASYFGEISIGTPPQNFLVLFDTGSSNLWVSSVYCQSEACTTHARFNPSKSSTYYTEGQTFSLQYGTGSLTGFFGYDTLTVQSIQVPNQEFGLSENEPGTNFVYAQFDGIMGLAYPGLSSGGATTALQGMLGEGALSQPLFGVYLGSQQGSNGGQIVFGGVDKNLYTGEITWVPVTQELYWQITIDDFLIGDQASGWCSSQGCQGIVDTGTSLLVMPAQYLSELLQTIGAQEGEYGEYFVSCDSVSSLPTLSFVLNGVQFPLSPSSYIIQEDNFCMVGLESISLTSESGQPLWILGDVFLRSYYAIFDMGNNKVGLATSV</sequence>
<comment type="function">
    <text>Hydrolyzes a variety of proteins.</text>
</comment>
<comment type="catalytic activity">
    <reaction>
        <text>More restricted specificity than pepsin A, but shows preferential cleavage at Tyr-|-Xaa bonds. High activity on hemoglobin.</text>
        <dbReference type="EC" id="3.4.23.3"/>
    </reaction>
</comment>
<comment type="subcellular location">
    <subcellularLocation>
        <location>Secreted</location>
    </subcellularLocation>
</comment>
<comment type="similarity">
    <text evidence="5">Belongs to the peptidase A1 family.</text>
</comment>
<keyword id="KW-0064">Aspartyl protease</keyword>
<keyword id="KW-0222">Digestion</keyword>
<keyword id="KW-0903">Direct protein sequencing</keyword>
<keyword id="KW-1015">Disulfide bond</keyword>
<keyword id="KW-0378">Hydrolase</keyword>
<keyword id="KW-0645">Protease</keyword>
<keyword id="KW-1185">Reference proteome</keyword>
<keyword id="KW-0964">Secreted</keyword>
<keyword id="KW-0732">Signal</keyword>
<keyword id="KW-0865">Zymogen</keyword>
<accession>P04073</accession>